<proteinExistence type="evidence at protein level"/>
<accession>Q92616</accession>
<accession>A8KAY1</accession>
<accession>O95001</accession>
<accession>O95651</accession>
<accession>Q6P2S3</accession>
<accession>Q86X65</accession>
<accession>Q8N5I5</accession>
<accession>Q8WU80</accession>
<accession>Q99736</accession>
<accession>Q9UE60</accession>
<keyword id="KW-0007">Acetylation</keyword>
<keyword id="KW-0010">Activator</keyword>
<keyword id="KW-0175">Coiled coil</keyword>
<keyword id="KW-0963">Cytoplasm</keyword>
<keyword id="KW-0903">Direct protein sequencing</keyword>
<keyword id="KW-0597">Phosphoprotein</keyword>
<keyword id="KW-1267">Proteomics identification</keyword>
<keyword id="KW-1185">Reference proteome</keyword>
<keyword id="KW-0677">Repeat</keyword>
<keyword id="KW-0346">Stress response</keyword>
<keyword id="KW-0810">Translation regulation</keyword>
<dbReference type="EMBL" id="D86973">
    <property type="protein sequence ID" value="BAA13209.2"/>
    <property type="status" value="ALT_INIT"/>
    <property type="molecule type" value="mRNA"/>
</dbReference>
<dbReference type="EMBL" id="AC004812">
    <property type="status" value="NOT_ANNOTATED_CDS"/>
    <property type="molecule type" value="Genomic_DNA"/>
</dbReference>
<dbReference type="EMBL" id="KF459556">
    <property type="status" value="NOT_ANNOTATED_CDS"/>
    <property type="molecule type" value="Genomic_DNA"/>
</dbReference>
<dbReference type="EMBL" id="KF511175">
    <property type="status" value="NOT_ANNOTATED_CDS"/>
    <property type="molecule type" value="Genomic_DNA"/>
</dbReference>
<dbReference type="EMBL" id="AC004263">
    <property type="status" value="NOT_ANNOTATED_CDS"/>
    <property type="molecule type" value="Genomic_DNA"/>
</dbReference>
<dbReference type="EMBL" id="BC021129">
    <property type="protein sequence ID" value="AAH21129.1"/>
    <property type="molecule type" value="mRNA"/>
</dbReference>
<dbReference type="EMBL" id="BC032335">
    <property type="protein sequence ID" value="AAH32335.1"/>
    <property type="molecule type" value="mRNA"/>
</dbReference>
<dbReference type="EMBL" id="BC046177">
    <property type="protein sequence ID" value="AAH46177.1"/>
    <property type="molecule type" value="mRNA"/>
</dbReference>
<dbReference type="EMBL" id="BC064346">
    <property type="protein sequence ID" value="AAH64346.1"/>
    <property type="molecule type" value="mRNA"/>
</dbReference>
<dbReference type="EMBL" id="BC153881">
    <property type="protein sequence ID" value="AAI53882.1"/>
    <property type="molecule type" value="mRNA"/>
</dbReference>
<dbReference type="EMBL" id="U88836">
    <property type="protein sequence ID" value="AAD00655.1"/>
    <property type="molecule type" value="mRNA"/>
</dbReference>
<dbReference type="EMBL" id="U88837">
    <property type="protein sequence ID" value="AAD00656.1"/>
    <property type="molecule type" value="mRNA"/>
</dbReference>
<dbReference type="EMBL" id="U77700">
    <property type="protein sequence ID" value="AAC51648.1"/>
    <property type="status" value="ALT_FRAME"/>
    <property type="molecule type" value="mRNA"/>
</dbReference>
<dbReference type="CCDS" id="CCDS41847.1"/>
<dbReference type="RefSeq" id="NP_006827.1">
    <property type="nucleotide sequence ID" value="NM_006836.2"/>
</dbReference>
<dbReference type="BioGRID" id="116181">
    <property type="interactions" value="395"/>
</dbReference>
<dbReference type="CORUM" id="Q92616"/>
<dbReference type="FunCoup" id="Q92616">
    <property type="interactions" value="3623"/>
</dbReference>
<dbReference type="IntAct" id="Q92616">
    <property type="interactions" value="161"/>
</dbReference>
<dbReference type="MINT" id="Q92616"/>
<dbReference type="STRING" id="9606.ENSP00000300648"/>
<dbReference type="ChEMBL" id="CHEMBL3706558"/>
<dbReference type="CarbonylDB" id="Q92616"/>
<dbReference type="GlyGen" id="Q92616">
    <property type="glycosylation" value="2 sites, 1 O-linked glycan (1 site)"/>
</dbReference>
<dbReference type="iPTMnet" id="Q92616"/>
<dbReference type="MetOSite" id="Q92616"/>
<dbReference type="PhosphoSitePlus" id="Q92616"/>
<dbReference type="SwissPalm" id="Q92616"/>
<dbReference type="BioMuta" id="GCN1"/>
<dbReference type="DMDM" id="296439506"/>
<dbReference type="jPOST" id="Q92616"/>
<dbReference type="MassIVE" id="Q92616"/>
<dbReference type="PaxDb" id="9606-ENSP00000300648"/>
<dbReference type="PeptideAtlas" id="Q92616"/>
<dbReference type="ProteomicsDB" id="75364"/>
<dbReference type="Pumba" id="Q92616"/>
<dbReference type="Antibodypedia" id="9618">
    <property type="antibodies" value="80 antibodies from 15 providers"/>
</dbReference>
<dbReference type="DNASU" id="10985"/>
<dbReference type="Ensembl" id="ENST00000300648.7">
    <property type="protein sequence ID" value="ENSP00000300648.6"/>
    <property type="gene ID" value="ENSG00000089154.11"/>
</dbReference>
<dbReference type="GeneID" id="10985"/>
<dbReference type="KEGG" id="hsa:10985"/>
<dbReference type="MANE-Select" id="ENST00000300648.7">
    <property type="protein sequence ID" value="ENSP00000300648.6"/>
    <property type="RefSeq nucleotide sequence ID" value="NM_006836.2"/>
    <property type="RefSeq protein sequence ID" value="NP_006827.1"/>
</dbReference>
<dbReference type="UCSC" id="uc001txo.4">
    <property type="organism name" value="human"/>
</dbReference>
<dbReference type="AGR" id="HGNC:4199"/>
<dbReference type="CTD" id="10985"/>
<dbReference type="DisGeNET" id="10985"/>
<dbReference type="GeneCards" id="GCN1"/>
<dbReference type="HGNC" id="HGNC:4199">
    <property type="gene designation" value="GCN1"/>
</dbReference>
<dbReference type="HPA" id="ENSG00000089154">
    <property type="expression patterns" value="Low tissue specificity"/>
</dbReference>
<dbReference type="MIM" id="605614">
    <property type="type" value="gene"/>
</dbReference>
<dbReference type="neXtProt" id="NX_Q92616"/>
<dbReference type="OpenTargets" id="ENSG00000089154"/>
<dbReference type="PharmGKB" id="PA28616"/>
<dbReference type="VEuPathDB" id="HostDB:ENSG00000089154"/>
<dbReference type="eggNOG" id="KOG1242">
    <property type="taxonomic scope" value="Eukaryota"/>
</dbReference>
<dbReference type="GeneTree" id="ENSGT00940000153612"/>
<dbReference type="HOGENOM" id="CLU_000504_2_2_1"/>
<dbReference type="InParanoid" id="Q92616"/>
<dbReference type="OMA" id="KYATQRG"/>
<dbReference type="OrthoDB" id="5148094at2759"/>
<dbReference type="PAN-GO" id="Q92616">
    <property type="GO annotations" value="4 GO annotations based on evolutionary models"/>
</dbReference>
<dbReference type="PhylomeDB" id="Q92616"/>
<dbReference type="TreeFam" id="TF105398"/>
<dbReference type="PathwayCommons" id="Q92616"/>
<dbReference type="Reactome" id="R-HSA-9633012">
    <property type="pathway name" value="Response of EIF2AK4 (GCN2) to amino acid deficiency"/>
</dbReference>
<dbReference type="SignaLink" id="Q92616"/>
<dbReference type="BioGRID-ORCS" id="10985">
    <property type="hits" value="359 hits in 1171 CRISPR screens"/>
</dbReference>
<dbReference type="CD-CODE" id="91857CE7">
    <property type="entry name" value="Nucleolus"/>
</dbReference>
<dbReference type="ChiTaRS" id="GCN1">
    <property type="organism name" value="human"/>
</dbReference>
<dbReference type="GeneWiki" id="GCN1L1"/>
<dbReference type="GenomeRNAi" id="10985"/>
<dbReference type="Pharos" id="Q92616">
    <property type="development level" value="Tbio"/>
</dbReference>
<dbReference type="PRO" id="PR:Q92616"/>
<dbReference type="Proteomes" id="UP000005640">
    <property type="component" value="Chromosome 12"/>
</dbReference>
<dbReference type="RNAct" id="Q92616">
    <property type="molecule type" value="protein"/>
</dbReference>
<dbReference type="Bgee" id="ENSG00000089154">
    <property type="expression patterns" value="Expressed in ventricular zone and 213 other cell types or tissues"/>
</dbReference>
<dbReference type="GO" id="GO:0005737">
    <property type="term" value="C:cytoplasm"/>
    <property type="evidence" value="ECO:0000250"/>
    <property type="project" value="UniProtKB"/>
</dbReference>
<dbReference type="GO" id="GO:0005829">
    <property type="term" value="C:cytosol"/>
    <property type="evidence" value="ECO:0000314"/>
    <property type="project" value="HPA"/>
</dbReference>
<dbReference type="GO" id="GO:0022626">
    <property type="term" value="C:cytosolic ribosome"/>
    <property type="evidence" value="ECO:0000314"/>
    <property type="project" value="UniProt"/>
</dbReference>
<dbReference type="GO" id="GO:0016020">
    <property type="term" value="C:membrane"/>
    <property type="evidence" value="ECO:0007005"/>
    <property type="project" value="UniProtKB"/>
</dbReference>
<dbReference type="GO" id="GO:0005840">
    <property type="term" value="C:ribosome"/>
    <property type="evidence" value="ECO:0000303"/>
    <property type="project" value="UniProtKB"/>
</dbReference>
<dbReference type="GO" id="GO:0045296">
    <property type="term" value="F:cadherin binding"/>
    <property type="evidence" value="ECO:0007005"/>
    <property type="project" value="BHF-UCL"/>
</dbReference>
<dbReference type="GO" id="GO:0060090">
    <property type="term" value="F:molecular adaptor activity"/>
    <property type="evidence" value="ECO:0000314"/>
    <property type="project" value="UniProtKB"/>
</dbReference>
<dbReference type="GO" id="GO:0019887">
    <property type="term" value="F:protein kinase regulator activity"/>
    <property type="evidence" value="ECO:0000314"/>
    <property type="project" value="UniProt"/>
</dbReference>
<dbReference type="GO" id="GO:0043539">
    <property type="term" value="F:protein serine/threonine kinase activator activity"/>
    <property type="evidence" value="ECO:0000250"/>
    <property type="project" value="UniProtKB"/>
</dbReference>
<dbReference type="GO" id="GO:0003723">
    <property type="term" value="F:RNA binding"/>
    <property type="evidence" value="ECO:0007005"/>
    <property type="project" value="UniProtKB"/>
</dbReference>
<dbReference type="GO" id="GO:0170011">
    <property type="term" value="F:stalled ribosome sensor activity"/>
    <property type="evidence" value="ECO:0000314"/>
    <property type="project" value="UniProtKB"/>
</dbReference>
<dbReference type="GO" id="GO:0008135">
    <property type="term" value="F:translation factor activity, RNA binding"/>
    <property type="evidence" value="ECO:0000303"/>
    <property type="project" value="UniProtKB"/>
</dbReference>
<dbReference type="GO" id="GO:0055106">
    <property type="term" value="F:ubiquitin-protein transferase regulator activity"/>
    <property type="evidence" value="ECO:0000314"/>
    <property type="project" value="UniProt"/>
</dbReference>
<dbReference type="GO" id="GO:0034198">
    <property type="term" value="P:cellular response to amino acid starvation"/>
    <property type="evidence" value="ECO:0000318"/>
    <property type="project" value="GO_Central"/>
</dbReference>
<dbReference type="GO" id="GO:0140469">
    <property type="term" value="P:GCN2-mediated signaling"/>
    <property type="evidence" value="ECO:0000250"/>
    <property type="project" value="UniProtKB"/>
</dbReference>
<dbReference type="GO" id="GO:0160127">
    <property type="term" value="P:protein-RNA covalent cross-linking repair"/>
    <property type="evidence" value="ECO:0000314"/>
    <property type="project" value="UniProt"/>
</dbReference>
<dbReference type="GO" id="GO:0006417">
    <property type="term" value="P:regulation of translation"/>
    <property type="evidence" value="ECO:0000318"/>
    <property type="project" value="GO_Central"/>
</dbReference>
<dbReference type="GO" id="GO:0072344">
    <property type="term" value="P:rescue of stalled ribosome"/>
    <property type="evidence" value="ECO:0000314"/>
    <property type="project" value="UniProtKB"/>
</dbReference>
<dbReference type="FunFam" id="1.25.10.10:FF:000090">
    <property type="entry name" value="eIF-2-alpha kinase activator GCN1"/>
    <property type="match status" value="1"/>
</dbReference>
<dbReference type="FunFam" id="1.25.10.10:FF:000096">
    <property type="entry name" value="eIF-2-alpha kinase activator gcn1"/>
    <property type="match status" value="1"/>
</dbReference>
<dbReference type="FunFam" id="1.25.10.10:FF:000162">
    <property type="entry name" value="GCN1, eIF2 alpha kinase activator homolog"/>
    <property type="match status" value="1"/>
</dbReference>
<dbReference type="FunFam" id="1.25.10.10:FF:000198">
    <property type="entry name" value="GCN1, eIF2 alpha kinase activator homolog"/>
    <property type="match status" value="1"/>
</dbReference>
<dbReference type="FunFam" id="1.25.10.10:FF:000226">
    <property type="entry name" value="GCN1, eIF2 alpha kinase activator homolog"/>
    <property type="match status" value="1"/>
</dbReference>
<dbReference type="FunFam" id="1.25.10.10:FF:000361">
    <property type="entry name" value="GCN1, eIF2 alpha kinase activator homolog"/>
    <property type="match status" value="1"/>
</dbReference>
<dbReference type="Gene3D" id="1.25.10.10">
    <property type="entry name" value="Leucine-rich Repeat Variant"/>
    <property type="match status" value="7"/>
</dbReference>
<dbReference type="InterPro" id="IPR011989">
    <property type="entry name" value="ARM-like"/>
</dbReference>
<dbReference type="InterPro" id="IPR016024">
    <property type="entry name" value="ARM-type_fold"/>
</dbReference>
<dbReference type="InterPro" id="IPR056810">
    <property type="entry name" value="GNC1-like_N"/>
</dbReference>
<dbReference type="InterPro" id="IPR021133">
    <property type="entry name" value="HEAT_type_2"/>
</dbReference>
<dbReference type="InterPro" id="IPR034085">
    <property type="entry name" value="TOG"/>
</dbReference>
<dbReference type="PANTHER" id="PTHR23346:SF7">
    <property type="entry name" value="STALLED RIBOSOME SENSOR GCN1"/>
    <property type="match status" value="1"/>
</dbReference>
<dbReference type="PANTHER" id="PTHR23346">
    <property type="entry name" value="TRANSLATIONAL ACTIVATOR GCN1-RELATED"/>
    <property type="match status" value="1"/>
</dbReference>
<dbReference type="Pfam" id="PF24993">
    <property type="entry name" value="GNC1_N"/>
    <property type="match status" value="1"/>
</dbReference>
<dbReference type="Pfam" id="PF24984">
    <property type="entry name" value="HEAT_EF3_GNC1"/>
    <property type="match status" value="1"/>
</dbReference>
<dbReference type="Pfam" id="PF24987">
    <property type="entry name" value="HEAT_EF3_N"/>
    <property type="match status" value="2"/>
</dbReference>
<dbReference type="Pfam" id="PF23271">
    <property type="entry name" value="HEAT_GCN1"/>
    <property type="match status" value="1"/>
</dbReference>
<dbReference type="SMART" id="SM01349">
    <property type="entry name" value="TOG"/>
    <property type="match status" value="1"/>
</dbReference>
<dbReference type="SUPFAM" id="SSF48371">
    <property type="entry name" value="ARM repeat"/>
    <property type="match status" value="5"/>
</dbReference>
<dbReference type="PROSITE" id="PS50077">
    <property type="entry name" value="HEAT_REPEAT"/>
    <property type="match status" value="3"/>
</dbReference>
<name>GCN1_HUMAN</name>
<organism>
    <name type="scientific">Homo sapiens</name>
    <name type="common">Human</name>
    <dbReference type="NCBI Taxonomy" id="9606"/>
    <lineage>
        <taxon>Eukaryota</taxon>
        <taxon>Metazoa</taxon>
        <taxon>Chordata</taxon>
        <taxon>Craniata</taxon>
        <taxon>Vertebrata</taxon>
        <taxon>Euteleostomi</taxon>
        <taxon>Mammalia</taxon>
        <taxon>Eutheria</taxon>
        <taxon>Euarchontoglires</taxon>
        <taxon>Primates</taxon>
        <taxon>Haplorrhini</taxon>
        <taxon>Catarrhini</taxon>
        <taxon>Hominidae</taxon>
        <taxon>Homo</taxon>
    </lineage>
</organism>
<sequence>MAADTQVSETLKRFAGKVTTASVKERREILSELGKCVAGKDLPEGAVKGLCKLFCLTLHRYRDAASRRALQAAIQQLAEAQPEATAKNLLHSLQSSGIGSKAGVPSKSSGSAALLALTWTCLLVRIVFPSRAKRQGDIWNKLVEVQCLLLLEVLGGSHKHAVDGAVKKLTKLWKENPGLVEQYLSAILSLEPNQNYAGMLGLLVQFCTSHKEMDVVSQHKSALLDFYMKNILMSKVKPPKYLLDSCAPLLRYLSHSEFKDLILPTIQKSLLRSPENVIETISSLLASVTLDLSQYAMDIVKGLAGHLKSNSPRLMDEAVLALRNLARQCSDSSAMESLTKHLFAILGGSEGKLTVVAQKMSVLSGIGSVSHHVVSGPSSQVLNGIVAELFIPFLQQEVHEGTLVHAVSVLALWCNRFTMEVPKKLTEWFKKAFSLKTSTSAVRHAYLQCMLASYRGDTLLQALDLLPLLIQTVEKAASQSTQVPTITEGVAAALLLLKLSVADSQAEAKLSSFWQLIVDEKKQVFTSEKFLVMASEDALCTVLHLTERLFLDHPHRLTGNKVQQYHRALVAVLLSRTWHVRRQAQQTVRKLLSSLGGFKLAHGLLEELKTVLSSHKVLPLEALVTDAGEVTEAGKAYVPPRVLQEALCVISGVPGLKGDVTDTEQLAQEMLIISHHPSLVAVQSGLWPALLARMKIDPEAFITRHLDQIIPRMTTQSPLNQSSMNAMGSLSVLSPDRVLPQLISTITASVQNPALRLVTREEFAIMQTPAGELYDKSIIQSAQQDSIKKANMKRENKAYSFKEQIIELELKEEIKKKKGIKEEVQLTSKQKEMLQAQLDREAQVRRRLQELDGELEAALGLLDIILAKNPSGLTQYIPVLVDSFLPLLKSPLAAPRIKNPFLSLAACVMPSRLKALGTLVSHVTLRLLKPECVLDKSWCQEELSVAVKRAVMLLHTHTITSRVGKGEPGAAPLSAPAFSLVFPFLKMVLTEMPHHSEEEEEWMAQILQILTVQAQLRASPNTPPGRVDENGPELLPRVAMLRLLTWVIGTGSPRLQVLASDTLTTLCASSSGDDGCAFAEQEEVDVLLCALQSPCASVRETVLRGLMELHMVLPAPDTDEKNGLNLLRRLWVVKFDKEEEIRKLAERLWSMMGLDLQPDLCSLLIDDVIYHEAAVRQAGAEALSQAVARYQRQAAEVMGRLMEIYQEKLYRPPPVLDALGRVISESPPDQWEARCGLALALNKLSQYLDSSQVKPLFQFFVPDALNDRHPDVRKCMLDAALATLNTHGKENVNSLLPVFEEFLKNAPNDASYDAVRQSVVVLMGSLAKHLDKSDPKVKPIVAKLIAALSTPSQQVQESVASCLPPLVPAIKEDAGGMIQRLMQQLLESDKYAERKGAAYGLAGLVKGLGILSLKQQEMMAALTDAIQDKKNFRRREGALFAFEMLCTMLGKLFEPYVVHVLPHLLLCFGDGNQYVREAADDCAKAVMSNLSAHGVKLVLPSLLAALEEESWRTKAGSVELLGAMAYCAPKQLSSCLPNIVPKLTEVLTDSHVKVQKAGQQALRQIGSVIRNPEILAIAPVLLDALTDPSRKTQKCLQTLLDTKFVHFIDAPSLALIMPIVQRAFQDRSTDTRKMAAQIIGNMYSLTDQKDLAPYLPSVTPGLKASLLDPVPEVRTVSAKALGAMVKGMGESCFEDLLPWLMETLTYEQSSVDRSGAAQGLAEVMAGLGVEKLEKLMPEIVATASKVDIAPHVRDGYIMMFNYLPITFGDKFTPYVGPIIPCILKALADENEFVRDTALRAGQRVISMYAETAIALLLPQLEQGLFDDLWRIRFSSVQLLGDLLFHISGVTGKMTTETASEDDNFGTAQSNKAIITALGVERRNRVLAGLYMGRSDTQLVVRQASLHVWKIVVSNTPRTLREILPTLFGLLLGFLASTCADKRTIAARTLGDLVRKLGEKILPEIIPILEEGLRSQKSDERQGVCIGLSEIMKSTSRDAVLYFSESLVPTARKALCDPLEEVREAAAKTFEQLHSTIGHQALEDILPFLLKQLDDEEVSEFALDGLKQVMAIKSRVVLPYLVPKLTTPPVNTRVLAFLSSVAGDALTRHLGVILPAVMLALKEKLGTPDEQLEMANCQAVILSVEDDTGHRIIIEDLLEATRSPEVGMRQAAAIILNIYCSRSKADYTSHLRSLVSGLIRLFNDSSPVVLEESWDALNAITKKLDAGNQLALIEELHKEIRLIGNESKGEHVPGFCLPKKGVTSILPVLREGVLTGSPEQKEEAAKALGLVIRLTSADALRPSVVSITGPLIRILGDRFSWNVKAALLETLSLLLAKVGIALKPFLPQLQTTFTKALQDSNRGVRLKAADALGKLISIHIKVDPLFTELLNGIRAMEDPGVRDTMLQALRFVIQGAGAKVDAVIRKNIVSLLLSMLGHDEDNTRISSAGCLGELCAFLTEEELSAVLQQCLLADVSGIDWMVRHGRSLALSVAVNVAPGRLCAGRYSSDVQEMILSSATADRIPIAVSGVRGMGFLMRHHIETGGGQLPAKLSSLFVKCLQNPSSDIRLVAEKMIWWANKDPLPPLDPQAIKPILKALLDNTKDKNTVVRAYSDQAIVNLLKMRQGEEVFQSLSKILDVASLEVLNEVNRRSLKKLASQADSTEQVDDTILT</sequence>
<evidence type="ECO:0000250" key="1">
    <source>
        <dbReference type="UniProtKB" id="E9PVA8"/>
    </source>
</evidence>
<evidence type="ECO:0000250" key="2">
    <source>
        <dbReference type="UniProtKB" id="P33892"/>
    </source>
</evidence>
<evidence type="ECO:0000255" key="3"/>
<evidence type="ECO:0000269" key="4">
    <source>
    </source>
</evidence>
<evidence type="ECO:0000269" key="5">
    <source>
    </source>
</evidence>
<evidence type="ECO:0000269" key="6">
    <source>
    </source>
</evidence>
<evidence type="ECO:0000269" key="7">
    <source>
    </source>
</evidence>
<evidence type="ECO:0000269" key="8">
    <source>
    </source>
</evidence>
<evidence type="ECO:0000269" key="9">
    <source>
    </source>
</evidence>
<evidence type="ECO:0000269" key="10">
    <source>
    </source>
</evidence>
<evidence type="ECO:0000269" key="11">
    <source>
    </source>
</evidence>
<evidence type="ECO:0000269" key="12">
    <source ref="5"/>
</evidence>
<evidence type="ECO:0000303" key="13">
    <source>
    </source>
</evidence>
<evidence type="ECO:0000305" key="14"/>
<evidence type="ECO:0000312" key="15">
    <source>
        <dbReference type="HGNC" id="HGNC:4199"/>
    </source>
</evidence>
<evidence type="ECO:0007744" key="16">
    <source>
    </source>
</evidence>
<evidence type="ECO:0007744" key="17">
    <source>
    </source>
</evidence>
<evidence type="ECO:0007744" key="18">
    <source>
    </source>
</evidence>
<evidence type="ECO:0007744" key="19">
    <source>
    </source>
</evidence>
<feature type="initiator methionine" description="Removed" evidence="4 12 17 18">
    <location>
        <position position="1"/>
    </location>
</feature>
<feature type="chain" id="PRO_0000087443" description="Stalled ribosome sensor GCN1">
    <location>
        <begin position="2"/>
        <end position="2671"/>
    </location>
</feature>
<feature type="repeat" description="HEAT 1" evidence="3">
    <location>
        <begin position="140"/>
        <end position="178"/>
    </location>
</feature>
<feature type="repeat" description="HEAT 2" evidence="3">
    <location>
        <begin position="257"/>
        <end position="293"/>
    </location>
</feature>
<feature type="repeat" description="HEAT 3" evidence="3">
    <location>
        <begin position="294"/>
        <end position="331"/>
    </location>
</feature>
<feature type="repeat" description="HEAT 4" evidence="3">
    <location>
        <begin position="385"/>
        <end position="423"/>
    </location>
</feature>
<feature type="repeat" description="HEAT 5" evidence="3">
    <location>
        <begin position="425"/>
        <end position="459"/>
    </location>
</feature>
<feature type="repeat" description="HEAT 6" evidence="3">
    <location>
        <begin position="460"/>
        <end position="503"/>
    </location>
</feature>
<feature type="repeat" description="HEAT 7" evidence="3">
    <location>
        <begin position="560"/>
        <end position="597"/>
    </location>
</feature>
<feature type="repeat" description="HEAT 8" evidence="3">
    <location>
        <begin position="599"/>
        <end position="636"/>
    </location>
</feature>
<feature type="repeat" description="HEAT 9" evidence="3">
    <location>
        <begin position="697"/>
        <end position="732"/>
    </location>
</feature>
<feature type="repeat" description="HEAT 10" evidence="3">
    <location>
        <begin position="733"/>
        <end position="770"/>
    </location>
</feature>
<feature type="repeat" description="HEAT 11" evidence="3">
    <location>
        <begin position="879"/>
        <end position="925"/>
    </location>
</feature>
<feature type="repeat" description="HEAT 12" evidence="3">
    <location>
        <begin position="979"/>
        <end position="1016"/>
    </location>
</feature>
<feature type="repeat" description="HEAT 13" evidence="3">
    <location>
        <begin position="1035"/>
        <end position="1072"/>
    </location>
</feature>
<feature type="repeat" description="HEAT 14" evidence="3">
    <location>
        <begin position="1078"/>
        <end position="1115"/>
    </location>
</feature>
<feature type="repeat" description="HEAT 15" evidence="3">
    <location>
        <begin position="1155"/>
        <end position="1192"/>
    </location>
</feature>
<feature type="repeat" description="HEAT 16" evidence="3">
    <location>
        <begin position="1210"/>
        <end position="1250"/>
    </location>
</feature>
<feature type="repeat" description="HEAT 17" evidence="3">
    <location>
        <begin position="1251"/>
        <end position="1289"/>
    </location>
</feature>
<feature type="repeat" description="HEAT 18" evidence="3">
    <location>
        <begin position="1290"/>
        <end position="1332"/>
    </location>
</feature>
<feature type="repeat" description="HEAT 19" evidence="3">
    <location>
        <begin position="1335"/>
        <end position="1372"/>
    </location>
</feature>
<feature type="repeat" description="HEAT 20" evidence="3">
    <location>
        <begin position="1374"/>
        <end position="1410"/>
    </location>
</feature>
<feature type="repeat" description="HEAT 21" evidence="3">
    <location>
        <begin position="1413"/>
        <end position="1451"/>
    </location>
</feature>
<feature type="repeat" description="HEAT 22" evidence="3">
    <location>
        <begin position="1455"/>
        <end position="1492"/>
    </location>
</feature>
<feature type="repeat" description="HEAT 23" evidence="3">
    <location>
        <begin position="1493"/>
        <end position="1530"/>
    </location>
</feature>
<feature type="repeat" description="HEAT 24" evidence="3">
    <location>
        <begin position="1534"/>
        <end position="1571"/>
    </location>
</feature>
<feature type="repeat" description="HEAT 25" evidence="3">
    <location>
        <begin position="1573"/>
        <end position="1609"/>
    </location>
</feature>
<feature type="repeat" description="HEAT 26" evidence="3">
    <location>
        <begin position="1611"/>
        <end position="1648"/>
    </location>
</feature>
<feature type="repeat" description="HEAT 27" evidence="3">
    <location>
        <begin position="1653"/>
        <end position="1690"/>
    </location>
</feature>
<feature type="repeat" description="HEAT 28" evidence="3">
    <location>
        <begin position="1692"/>
        <end position="1729"/>
    </location>
</feature>
<feature type="repeat" description="HEAT 29" evidence="3">
    <location>
        <begin position="1731"/>
        <end position="1769"/>
    </location>
</feature>
<feature type="repeat" description="HEAT 30" evidence="3">
    <location>
        <begin position="1773"/>
        <end position="1810"/>
    </location>
</feature>
<feature type="repeat" description="HEAT 31" evidence="3">
    <location>
        <begin position="1812"/>
        <end position="1848"/>
    </location>
</feature>
<feature type="repeat" description="HEAT 32" evidence="3">
    <location>
        <begin position="1921"/>
        <end position="1958"/>
    </location>
</feature>
<feature type="repeat" description="HEAT 33" evidence="3">
    <location>
        <begin position="1959"/>
        <end position="1996"/>
    </location>
</feature>
<feature type="repeat" description="HEAT 34" evidence="3">
    <location>
        <begin position="2001"/>
        <end position="2038"/>
    </location>
</feature>
<feature type="repeat" description="HEAT 35" evidence="3">
    <location>
        <begin position="2039"/>
        <end position="2076"/>
    </location>
</feature>
<feature type="repeat" description="HEAT 36" evidence="3">
    <location>
        <begin position="2078"/>
        <end position="2106"/>
    </location>
</feature>
<feature type="repeat" description="HEAT 37" evidence="3">
    <location>
        <begin position="2107"/>
        <end position="2146"/>
    </location>
</feature>
<feature type="repeat" description="HEAT 38" evidence="3">
    <location>
        <begin position="2147"/>
        <end position="2184"/>
    </location>
</feature>
<feature type="repeat" description="HEAT 39" evidence="3">
    <location>
        <begin position="2188"/>
        <end position="2225"/>
    </location>
</feature>
<feature type="repeat" description="HEAT 40" evidence="3">
    <location>
        <begin position="2259"/>
        <end position="2296"/>
    </location>
</feature>
<feature type="repeat" description="HEAT 41" evidence="3">
    <location>
        <begin position="2301"/>
        <end position="2338"/>
    </location>
</feature>
<feature type="repeat" description="HEAT 42" evidence="3">
    <location>
        <begin position="2339"/>
        <end position="2380"/>
    </location>
</feature>
<feature type="repeat" description="HEAT 43" evidence="3">
    <location>
        <begin position="2382"/>
        <end position="2417"/>
    </location>
</feature>
<feature type="repeat" description="HEAT 44" evidence="3">
    <location>
        <begin position="2422"/>
        <end position="2459"/>
    </location>
</feature>
<feature type="repeat" description="HEAT 45" evidence="3">
    <location>
        <begin position="2546"/>
        <end position="2583"/>
    </location>
</feature>
<feature type="repeat" description="HEAT 46" evidence="3">
    <location>
        <begin position="2588"/>
        <end position="2625"/>
    </location>
</feature>
<feature type="repeat" description="HEAT 47; degenerate" evidence="3">
    <location>
        <begin position="2627"/>
        <end position="2661"/>
    </location>
</feature>
<feature type="region of interest" description="RWDBD region" evidence="2">
    <location>
        <begin position="2260"/>
        <end position="2408"/>
    </location>
</feature>
<feature type="coiled-coil region" evidence="3">
    <location>
        <begin position="804"/>
        <end position="863"/>
    </location>
</feature>
<feature type="modified residue" description="N-acetylalanine" evidence="4 12 17 18">
    <location>
        <position position="2"/>
    </location>
</feature>
<feature type="modified residue" description="Phosphoserine" evidence="19">
    <location>
        <position position="729"/>
    </location>
</feature>
<feature type="modified residue" description="Phosphoserine" evidence="16 19">
    <location>
        <position position="786"/>
    </location>
</feature>
<feature type="modified residue" description="Phosphoserine" evidence="19">
    <location>
        <position position="2276"/>
    </location>
</feature>
<feature type="sequence variant" id="VAR_062228" description="In dbSNP:rs3864938.">
    <original>D</original>
    <variation>Y</variation>
    <location>
        <position position="2155"/>
    </location>
</feature>
<feature type="mutagenesis site" description="Abolished interaction with RNF14 and decreased interaction with EIF2AK4/GCN2." evidence="6">
    <original>R</original>
    <variation>A</variation>
    <location>
        <position position="2312"/>
    </location>
</feature>
<feature type="sequence conflict" description="In Ref. 1; BAA13209 and 4; AAI53882." evidence="14" ref="1 4">
    <original>L</original>
    <variation>F</variation>
    <location>
        <position position="292"/>
    </location>
</feature>
<feature type="sequence conflict" description="In Ref. 7; AAC51648." evidence="14" ref="7">
    <original>A</original>
    <variation>G</variation>
    <location>
        <position position="842"/>
    </location>
</feature>
<feature type="sequence conflict" description="In Ref. 7; AAC51648." evidence="14" ref="7">
    <original>A</original>
    <variation>V</variation>
    <location>
        <position position="1584"/>
    </location>
</feature>
<feature type="sequence conflict" description="In Ref. 7; AAC51648." evidence="14" ref="7">
    <original>A</original>
    <variation>V</variation>
    <location>
        <position position="1683"/>
    </location>
</feature>
<feature type="sequence conflict" description="In Ref. 6; AAD00655." evidence="14" ref="6">
    <original>F</original>
    <variation>S</variation>
    <location>
        <position position="1760"/>
    </location>
</feature>
<feature type="sequence conflict" description="In Ref. 7; AAC51648." evidence="14" ref="7">
    <original>A</original>
    <variation>V</variation>
    <location>
        <position position="2298"/>
    </location>
</feature>
<feature type="sequence conflict" description="In Ref. 6; AAD00655." evidence="14" ref="6">
    <original>S</original>
    <variation>T</variation>
    <location>
        <position position="2486"/>
    </location>
</feature>
<feature type="sequence conflict" description="In Ref. 7; AAC51648." evidence="14" ref="7">
    <original>A</original>
    <variation>R</variation>
    <location>
        <position position="2549"/>
    </location>
</feature>
<gene>
    <name evidence="13 15" type="primary">GCN1</name>
    <name evidence="1" type="synonym">GCN1L1</name>
    <name type="synonym">KIAA0219</name>
</gene>
<reference key="1">
    <citation type="journal article" date="1996" name="DNA Res.">
        <title>Prediction of the coding sequences of unidentified human genes. VI. The coding sequences of 80 new genes (KIAA0201-KIAA0280) deduced by analysis of cDNA clones from cell line KG-1 and brain.</title>
        <authorList>
            <person name="Nagase T."/>
            <person name="Seki N."/>
            <person name="Ishikawa K."/>
            <person name="Ohira M."/>
            <person name="Kawarabayasi Y."/>
            <person name="Ohara O."/>
            <person name="Tanaka A."/>
            <person name="Kotani H."/>
            <person name="Miyajima N."/>
            <person name="Nomura N."/>
        </authorList>
    </citation>
    <scope>NUCLEOTIDE SEQUENCE [LARGE SCALE MRNA]</scope>
    <scope>TISSUE SPECIFICITY</scope>
    <source>
        <tissue>Brain</tissue>
    </source>
</reference>
<reference key="2">
    <citation type="journal article" date="2002" name="DNA Res.">
        <title>Construction of expression-ready cDNA clones for KIAA genes: manual curation of 330 KIAA cDNA clones.</title>
        <authorList>
            <person name="Nakajima D."/>
            <person name="Okazaki N."/>
            <person name="Yamakawa H."/>
            <person name="Kikuno R."/>
            <person name="Ohara O."/>
            <person name="Nagase T."/>
        </authorList>
    </citation>
    <scope>SEQUENCE REVISION</scope>
</reference>
<reference key="3">
    <citation type="journal article" date="2006" name="Nature">
        <title>The finished DNA sequence of human chromosome 12.</title>
        <authorList>
            <person name="Scherer S.E."/>
            <person name="Muzny D.M."/>
            <person name="Buhay C.J."/>
            <person name="Chen R."/>
            <person name="Cree A."/>
            <person name="Ding Y."/>
            <person name="Dugan-Rocha S."/>
            <person name="Gill R."/>
            <person name="Gunaratne P."/>
            <person name="Harris R.A."/>
            <person name="Hawes A.C."/>
            <person name="Hernandez J."/>
            <person name="Hodgson A.V."/>
            <person name="Hume J."/>
            <person name="Jackson A."/>
            <person name="Khan Z.M."/>
            <person name="Kovar-Smith C."/>
            <person name="Lewis L.R."/>
            <person name="Lozado R.J."/>
            <person name="Metzker M.L."/>
            <person name="Milosavljevic A."/>
            <person name="Miner G.R."/>
            <person name="Montgomery K.T."/>
            <person name="Morgan M.B."/>
            <person name="Nazareth L.V."/>
            <person name="Scott G."/>
            <person name="Sodergren E."/>
            <person name="Song X.-Z."/>
            <person name="Steffen D."/>
            <person name="Lovering R.C."/>
            <person name="Wheeler D.A."/>
            <person name="Worley K.C."/>
            <person name="Yuan Y."/>
            <person name="Zhang Z."/>
            <person name="Adams C.Q."/>
            <person name="Ansari-Lari M.A."/>
            <person name="Ayele M."/>
            <person name="Brown M.J."/>
            <person name="Chen G."/>
            <person name="Chen Z."/>
            <person name="Clerc-Blankenburg K.P."/>
            <person name="Davis C."/>
            <person name="Delgado O."/>
            <person name="Dinh H.H."/>
            <person name="Draper H."/>
            <person name="Gonzalez-Garay M.L."/>
            <person name="Havlak P."/>
            <person name="Jackson L.R."/>
            <person name="Jacob L.S."/>
            <person name="Kelly S.H."/>
            <person name="Li L."/>
            <person name="Li Z."/>
            <person name="Liu J."/>
            <person name="Liu W."/>
            <person name="Lu J."/>
            <person name="Maheshwari M."/>
            <person name="Nguyen B.-V."/>
            <person name="Okwuonu G.O."/>
            <person name="Pasternak S."/>
            <person name="Perez L.M."/>
            <person name="Plopper F.J.H."/>
            <person name="Santibanez J."/>
            <person name="Shen H."/>
            <person name="Tabor P.E."/>
            <person name="Verduzco D."/>
            <person name="Waldron L."/>
            <person name="Wang Q."/>
            <person name="Williams G.A."/>
            <person name="Zhang J."/>
            <person name="Zhou J."/>
            <person name="Allen C.C."/>
            <person name="Amin A.G."/>
            <person name="Anyalebechi V."/>
            <person name="Bailey M."/>
            <person name="Barbaria J.A."/>
            <person name="Bimage K.E."/>
            <person name="Bryant N.P."/>
            <person name="Burch P.E."/>
            <person name="Burkett C.E."/>
            <person name="Burrell K.L."/>
            <person name="Calderon E."/>
            <person name="Cardenas V."/>
            <person name="Carter K."/>
            <person name="Casias K."/>
            <person name="Cavazos I."/>
            <person name="Cavazos S.R."/>
            <person name="Ceasar H."/>
            <person name="Chacko J."/>
            <person name="Chan S.N."/>
            <person name="Chavez D."/>
            <person name="Christopoulos C."/>
            <person name="Chu J."/>
            <person name="Cockrell R."/>
            <person name="Cox C.D."/>
            <person name="Dang M."/>
            <person name="Dathorne S.R."/>
            <person name="David R."/>
            <person name="Davis C.M."/>
            <person name="Davy-Carroll L."/>
            <person name="Deshazo D.R."/>
            <person name="Donlin J.E."/>
            <person name="D'Souza L."/>
            <person name="Eaves K.A."/>
            <person name="Egan A."/>
            <person name="Emery-Cohen A.J."/>
            <person name="Escotto M."/>
            <person name="Flagg N."/>
            <person name="Forbes L.D."/>
            <person name="Gabisi A.M."/>
            <person name="Garza M."/>
            <person name="Hamilton C."/>
            <person name="Henderson N."/>
            <person name="Hernandez O."/>
            <person name="Hines S."/>
            <person name="Hogues M.E."/>
            <person name="Huang M."/>
            <person name="Idlebird D.G."/>
            <person name="Johnson R."/>
            <person name="Jolivet A."/>
            <person name="Jones S."/>
            <person name="Kagan R."/>
            <person name="King L.M."/>
            <person name="Leal B."/>
            <person name="Lebow H."/>
            <person name="Lee S."/>
            <person name="LeVan J.M."/>
            <person name="Lewis L.C."/>
            <person name="London P."/>
            <person name="Lorensuhewa L.M."/>
            <person name="Loulseged H."/>
            <person name="Lovett D.A."/>
            <person name="Lucier A."/>
            <person name="Lucier R.L."/>
            <person name="Ma J."/>
            <person name="Madu R.C."/>
            <person name="Mapua P."/>
            <person name="Martindale A.D."/>
            <person name="Martinez E."/>
            <person name="Massey E."/>
            <person name="Mawhiney S."/>
            <person name="Meador M.G."/>
            <person name="Mendez S."/>
            <person name="Mercado C."/>
            <person name="Mercado I.C."/>
            <person name="Merritt C.E."/>
            <person name="Miner Z.L."/>
            <person name="Minja E."/>
            <person name="Mitchell T."/>
            <person name="Mohabbat F."/>
            <person name="Mohabbat K."/>
            <person name="Montgomery B."/>
            <person name="Moore N."/>
            <person name="Morris S."/>
            <person name="Munidasa M."/>
            <person name="Ngo R.N."/>
            <person name="Nguyen N.B."/>
            <person name="Nickerson E."/>
            <person name="Nwaokelemeh O.O."/>
            <person name="Nwokenkwo S."/>
            <person name="Obregon M."/>
            <person name="Oguh M."/>
            <person name="Oragunye N."/>
            <person name="Oviedo R.J."/>
            <person name="Parish B.J."/>
            <person name="Parker D.N."/>
            <person name="Parrish J."/>
            <person name="Parks K.L."/>
            <person name="Paul H.A."/>
            <person name="Payton B.A."/>
            <person name="Perez A."/>
            <person name="Perrin W."/>
            <person name="Pickens A."/>
            <person name="Primus E.L."/>
            <person name="Pu L.-L."/>
            <person name="Puazo M."/>
            <person name="Quiles M.M."/>
            <person name="Quiroz J.B."/>
            <person name="Rabata D."/>
            <person name="Reeves K."/>
            <person name="Ruiz S.J."/>
            <person name="Shao H."/>
            <person name="Sisson I."/>
            <person name="Sonaike T."/>
            <person name="Sorelle R.P."/>
            <person name="Sutton A.E."/>
            <person name="Svatek A.F."/>
            <person name="Svetz L.A."/>
            <person name="Tamerisa K.S."/>
            <person name="Taylor T.R."/>
            <person name="Teague B."/>
            <person name="Thomas N."/>
            <person name="Thorn R.D."/>
            <person name="Trejos Z.Y."/>
            <person name="Trevino B.K."/>
            <person name="Ukegbu O.N."/>
            <person name="Urban J.B."/>
            <person name="Vasquez L.I."/>
            <person name="Vera V.A."/>
            <person name="Villasana D.M."/>
            <person name="Wang L."/>
            <person name="Ward-Moore S."/>
            <person name="Warren J.T."/>
            <person name="Wei X."/>
            <person name="White F."/>
            <person name="Williamson A.L."/>
            <person name="Wleczyk R."/>
            <person name="Wooden H.S."/>
            <person name="Wooden S.H."/>
            <person name="Yen J."/>
            <person name="Yoon L."/>
            <person name="Yoon V."/>
            <person name="Zorrilla S.E."/>
            <person name="Nelson D."/>
            <person name="Kucherlapati R."/>
            <person name="Weinstock G."/>
            <person name="Gibbs R.A."/>
        </authorList>
    </citation>
    <scope>NUCLEOTIDE SEQUENCE [LARGE SCALE GENOMIC DNA]</scope>
</reference>
<reference key="4">
    <citation type="journal article" date="2004" name="Genome Res.">
        <title>The status, quality, and expansion of the NIH full-length cDNA project: the Mammalian Gene Collection (MGC).</title>
        <authorList>
            <consortium name="The MGC Project Team"/>
        </authorList>
    </citation>
    <scope>NUCLEOTIDE SEQUENCE [LARGE SCALE MRNA]</scope>
    <source>
        <tissue>Brain</tissue>
        <tissue>Liver</tissue>
        <tissue>Skin</tissue>
    </source>
</reference>
<reference key="5">
    <citation type="submission" date="2005-03" db="UniProtKB">
        <authorList>
            <person name="Bienvenut W.V."/>
        </authorList>
    </citation>
    <scope>PROTEIN SEQUENCE OF 2-13; 69-87; 221-229; 241-251; 314-323; 568-576; 617-635; 822-829; 1201-1208; 1485-1496; 1604-1622; 1735-1745; 1960-1973; 2093-2107; 2151-2161; 2192-2199; 2402-2418 AND 2522-2530</scope>
    <scope>CLEAVAGE OF INITIATOR METHIONINE</scope>
    <scope>ACETYLATION AT ALA-2</scope>
    <scope>IDENTIFICATION BY MASS SPECTROMETRY</scope>
    <source>
        <tissue>B-cell lymphoma</tissue>
    </source>
</reference>
<reference key="6">
    <citation type="submission" date="1997-02" db="EMBL/GenBank/DDBJ databases">
        <title>Transcription map of the 5cM region surrounding the hepatocyte nuclear factor-1a/MODY3 gene on chromosome 12.</title>
        <authorList>
            <person name="Yamagata K."/>
            <person name="Oda N."/>
            <person name="Furuta H."/>
            <person name="Vaxillaire M."/>
            <person name="Southam L."/>
            <person name="Boriraj V."/>
            <person name="Chen X."/>
            <person name="Oda Y."/>
            <person name="Takeda J."/>
            <person name="Yamada S."/>
            <person name="Nishigori H."/>
            <person name="Lebeau M.M."/>
            <person name="Lathrop M."/>
            <person name="Cox R.D."/>
            <person name="Bell G.I."/>
        </authorList>
    </citation>
    <scope>NUCLEOTIDE SEQUENCE [MRNA] OF 4-359 AND 1678-2671</scope>
</reference>
<reference key="7">
    <citation type="journal article" date="1997" name="Mol. Cell. Biol.">
        <title>Evidence that GCN1 and GCN20, translational regulators of GCN4, function on elongating ribosomes in activation of eIF2alpha kinase GCN2.</title>
        <authorList>
            <person name="Marton M.J."/>
            <person name="Vazquez de Aldana C.R."/>
            <person name="Qiu H."/>
            <person name="Chakraburtty K."/>
            <person name="Hinnebusch A.G."/>
        </authorList>
    </citation>
    <scope>NUCLEOTIDE SEQUENCE [MRNA] OF 842-2671</scope>
    <scope>TISSUE SPECIFICITY</scope>
    <source>
        <tissue>Skeletal muscle</tissue>
    </source>
</reference>
<reference key="8">
    <citation type="journal article" date="2008" name="Mol. Cell">
        <title>Kinase-selective enrichment enables quantitative phosphoproteomics of the kinome across the cell cycle.</title>
        <authorList>
            <person name="Daub H."/>
            <person name="Olsen J.V."/>
            <person name="Bairlein M."/>
            <person name="Gnad F."/>
            <person name="Oppermann F.S."/>
            <person name="Korner R."/>
            <person name="Greff Z."/>
            <person name="Keri G."/>
            <person name="Stemmann O."/>
            <person name="Mann M."/>
        </authorList>
    </citation>
    <scope>PHOSPHORYLATION [LARGE SCALE ANALYSIS] AT SER-786</scope>
    <scope>IDENTIFICATION BY MASS SPECTROMETRY [LARGE SCALE ANALYSIS]</scope>
    <source>
        <tissue>Cervix carcinoma</tissue>
    </source>
</reference>
<reference key="9">
    <citation type="journal article" date="2009" name="Anal. Chem.">
        <title>Lys-N and trypsin cover complementary parts of the phosphoproteome in a refined SCX-based approach.</title>
        <authorList>
            <person name="Gauci S."/>
            <person name="Helbig A.O."/>
            <person name="Slijper M."/>
            <person name="Krijgsveld J."/>
            <person name="Heck A.J."/>
            <person name="Mohammed S."/>
        </authorList>
    </citation>
    <scope>ACETYLATION [LARGE SCALE ANALYSIS] AT ALA-2</scope>
    <scope>CLEAVAGE OF INITIATOR METHIONINE [LARGE SCALE ANALYSIS]</scope>
    <scope>IDENTIFICATION BY MASS SPECTROMETRY [LARGE SCALE ANALYSIS]</scope>
</reference>
<reference key="10">
    <citation type="journal article" date="2009" name="Sci. Signal.">
        <title>Quantitative phosphoproteomic analysis of T cell receptor signaling reveals system-wide modulation of protein-protein interactions.</title>
        <authorList>
            <person name="Mayya V."/>
            <person name="Lundgren D.H."/>
            <person name="Hwang S.-I."/>
            <person name="Rezaul K."/>
            <person name="Wu L."/>
            <person name="Eng J.K."/>
            <person name="Rodionov V."/>
            <person name="Han D.K."/>
        </authorList>
    </citation>
    <scope>IDENTIFICATION BY MASS SPECTROMETRY [LARGE SCALE ANALYSIS]</scope>
    <source>
        <tissue>Leukemic T-cell</tissue>
    </source>
</reference>
<reference key="11">
    <citation type="journal article" date="2012" name="Mol. Cell. Proteomics">
        <title>Comparative large-scale characterisation of plant vs. mammal proteins reveals similar and idiosyncratic N-alpha acetylation features.</title>
        <authorList>
            <person name="Bienvenut W.V."/>
            <person name="Sumpton D."/>
            <person name="Martinez A."/>
            <person name="Lilla S."/>
            <person name="Espagne C."/>
            <person name="Meinnel T."/>
            <person name="Giglione C."/>
        </authorList>
    </citation>
    <scope>ACETYLATION [LARGE SCALE ANALYSIS] AT ALA-2</scope>
    <scope>CLEAVAGE OF INITIATOR METHIONINE [LARGE SCALE ANALYSIS]</scope>
    <scope>IDENTIFICATION BY MASS SPECTROMETRY [LARGE SCALE ANALYSIS]</scope>
</reference>
<reference key="12">
    <citation type="journal article" date="2012" name="Proc. Natl. Acad. Sci. U.S.A.">
        <title>N-terminal acetylome analyses and functional insights of the N-terminal acetyltransferase NatB.</title>
        <authorList>
            <person name="Van Damme P."/>
            <person name="Lasa M."/>
            <person name="Polevoda B."/>
            <person name="Gazquez C."/>
            <person name="Elosegui-Artola A."/>
            <person name="Kim D.S."/>
            <person name="De Juan-Pardo E."/>
            <person name="Demeyer K."/>
            <person name="Hole K."/>
            <person name="Larrea E."/>
            <person name="Timmerman E."/>
            <person name="Prieto J."/>
            <person name="Arnesen T."/>
            <person name="Sherman F."/>
            <person name="Gevaert K."/>
            <person name="Aldabe R."/>
        </authorList>
    </citation>
    <scope>IDENTIFICATION BY MASS SPECTROMETRY [LARGE SCALE ANALYSIS]</scope>
</reference>
<reference key="13">
    <citation type="journal article" date="2013" name="J. Proteome Res.">
        <title>Toward a comprehensive characterization of a human cancer cell phosphoproteome.</title>
        <authorList>
            <person name="Zhou H."/>
            <person name="Di Palma S."/>
            <person name="Preisinger C."/>
            <person name="Peng M."/>
            <person name="Polat A.N."/>
            <person name="Heck A.J."/>
            <person name="Mohammed S."/>
        </authorList>
    </citation>
    <scope>PHOSPHORYLATION [LARGE SCALE ANALYSIS] AT SER-729; SER-786 AND SER-2276</scope>
    <scope>IDENTIFICATION BY MASS SPECTROMETRY [LARGE SCALE ANALYSIS]</scope>
    <source>
        <tissue>Cervix carcinoma</tissue>
        <tissue>Erythroleukemia</tissue>
    </source>
</reference>
<reference key="14">
    <citation type="journal article" date="2014" name="J. Proteomics">
        <title>An enzyme assisted RP-RPLC approach for in-depth analysis of human liver phosphoproteome.</title>
        <authorList>
            <person name="Bian Y."/>
            <person name="Song C."/>
            <person name="Cheng K."/>
            <person name="Dong M."/>
            <person name="Wang F."/>
            <person name="Huang J."/>
            <person name="Sun D."/>
            <person name="Wang L."/>
            <person name="Ye M."/>
            <person name="Zou H."/>
        </authorList>
    </citation>
    <scope>IDENTIFICATION BY MASS SPECTROMETRY [LARGE SCALE ANALYSIS]</scope>
    <source>
        <tissue>Liver</tissue>
    </source>
</reference>
<reference key="15">
    <citation type="journal article" date="2015" name="Hum. Mol. Genet.">
        <title>Biochemical and cellular analysis of Ogden syndrome reveals downstream Nt-acetylation defects.</title>
        <authorList>
            <person name="Myklebust L.M."/>
            <person name="Van Damme P."/>
            <person name="Stoeve S.I."/>
            <person name="Doerfel M.J."/>
            <person name="Abboud A."/>
            <person name="Kalvik T.V."/>
            <person name="Grauffel C."/>
            <person name="Jonckheere V."/>
            <person name="Wu Y."/>
            <person name="Swensen J."/>
            <person name="Kaasa H."/>
            <person name="Liszczak G."/>
            <person name="Marmorstein R."/>
            <person name="Reuter N."/>
            <person name="Lyon G.J."/>
            <person name="Gevaert K."/>
            <person name="Arnesen T."/>
        </authorList>
    </citation>
    <scope>ACETYLATION AT ALA-2</scope>
    <scope>CLEAVAGE OF INITIATOR METHIONINE</scope>
</reference>
<reference key="16">
    <citation type="journal article" date="2015" name="Proteomics">
        <title>N-terminome analysis of the human mitochondrial proteome.</title>
        <authorList>
            <person name="Vaca Jacome A.S."/>
            <person name="Rabilloud T."/>
            <person name="Schaeffer-Reiss C."/>
            <person name="Rompais M."/>
            <person name="Ayoub D."/>
            <person name="Lane L."/>
            <person name="Bairoch A."/>
            <person name="Van Dorsselaer A."/>
            <person name="Carapito C."/>
        </authorList>
    </citation>
    <scope>IDENTIFICATION BY MASS SPECTROMETRY [LARGE SCALE ANALYSIS]</scope>
</reference>
<reference key="17">
    <citation type="journal article" date="2011" name="BMC Syst. Biol.">
        <title>Initial characterization of the human central proteome.</title>
        <authorList>
            <person name="Burkard T.R."/>
            <person name="Planyavsky M."/>
            <person name="Kaupe I."/>
            <person name="Breitwieser F.P."/>
            <person name="Buerckstuemmer T."/>
            <person name="Bennett K.L."/>
            <person name="Superti-Furga G."/>
            <person name="Colinge J."/>
        </authorList>
    </citation>
    <scope>IDENTIFICATION BY MASS SPECTROMETRY [LARGE SCALE ANALYSIS]</scope>
</reference>
<reference key="18">
    <citation type="journal article" date="2020" name="Cell">
        <title>Ribosome collisions trigger general stress responses to regulate cell fate.</title>
        <authorList>
            <person name="Wu C.C."/>
            <person name="Peterson A."/>
            <person name="Zinshteyn B."/>
            <person name="Regot S."/>
            <person name="Green R."/>
        </authorList>
    </citation>
    <scope>FUNCTION</scope>
</reference>
<reference key="19">
    <citation type="journal article" date="2023" name="Cell">
        <title>An E3 ligase network engages GCN1 to promote the degradation of translation factors on stalled ribosomes.</title>
        <authorList>
            <person name="Oltion K."/>
            <person name="Carelli J.D."/>
            <person name="Yang T."/>
            <person name="See S.K."/>
            <person name="Wang H.Y."/>
            <person name="Kampmann M."/>
            <person name="Taunton J."/>
        </authorList>
    </citation>
    <scope>FUNCTION</scope>
    <scope>INTERACTION WITH EIF2AK4 AND RNF14</scope>
    <scope>DOMAIN</scope>
    <scope>MUTAGENESIS OF ARG-2312</scope>
</reference>
<reference key="20">
    <citation type="journal article" date="2023" name="Cell Rep.">
        <title>Drug-induced eRF1 degradation promotes readthrough and reveals a new branch of ribosome quality control.</title>
        <authorList>
            <person name="Gurzeler L.A."/>
            <person name="Link M."/>
            <person name="Ibig Y."/>
            <person name="Schmidt I."/>
            <person name="Galuba O."/>
            <person name="Schoenbett J."/>
            <person name="Gasser-Didierlaurant C."/>
            <person name="Parker C.N."/>
            <person name="Mao X."/>
            <person name="Bitsch F."/>
            <person name="Schirle M."/>
            <person name="Couttet P."/>
            <person name="Sigoillot F."/>
            <person name="Ziegelmueller J."/>
            <person name="Uldry A.C."/>
            <person name="Teodorowicz W."/>
            <person name="Schmiedeberg N."/>
            <person name="Muehlemann O."/>
            <person name="Reinhardt J."/>
        </authorList>
    </citation>
    <scope>FUNCTION</scope>
</reference>
<reference key="21">
    <citation type="journal article" date="2023" name="Mol. Cell">
        <title>K6-linked ubiquitylation marks formaldehyde-induced RNA-protein crosslinks for resolution.</title>
        <authorList>
            <person name="Suryo Rahmanto A."/>
            <person name="Blum C.J."/>
            <person name="Scalera C."/>
            <person name="Heidelberger J.B."/>
            <person name="Mesitov M."/>
            <person name="Horn-Ghetko D."/>
            <person name="Graef J.F."/>
            <person name="Mikicic I."/>
            <person name="Hobrecht R."/>
            <person name="Orekhova A."/>
            <person name="Ostermaier M."/>
            <person name="Ebersberger S."/>
            <person name="Moeckel M.M."/>
            <person name="Krapoth N."/>
            <person name="Da Silva Fernandes N."/>
            <person name="Mizi A."/>
            <person name="Zhu Y."/>
            <person name="Chen J.X."/>
            <person name="Choudhary C."/>
            <person name="Papantonis A."/>
            <person name="Ulrich H.D."/>
            <person name="Schulman B.A."/>
            <person name="Koenig J."/>
            <person name="Beli P."/>
        </authorList>
    </citation>
    <scope>FUNCTION</scope>
</reference>
<reference key="22">
    <citation type="journal article" date="2023" name="Mol. Cell">
        <title>RNF14-dependent atypical ubiquitylation promotes translation-coupled resolution of RNA-protein crosslinks.</title>
        <authorList>
            <person name="Zhao S."/>
            <person name="Cordes J."/>
            <person name="Caban K.M."/>
            <person name="Goetz M.J."/>
            <person name="Mackens-Kiani T."/>
            <person name="Veltri A.J."/>
            <person name="Sinha N.K."/>
            <person name="Weickert P."/>
            <person name="Kaya S."/>
            <person name="Hewitt G."/>
            <person name="Nedialkova D.D."/>
            <person name="Froehlich T."/>
            <person name="Beckmann R."/>
            <person name="Buskirk A.R."/>
            <person name="Green R."/>
            <person name="Stingele J."/>
        </authorList>
    </citation>
    <scope>FUNCTION</scope>
</reference>
<protein>
    <recommendedName>
        <fullName evidence="14">Stalled ribosome sensor GCN1</fullName>
    </recommendedName>
    <alternativeName>
        <fullName evidence="15">GCN1 eIF-2-alpha kinase activator homolog</fullName>
    </alternativeName>
    <alternativeName>
        <fullName evidence="1">GCN1-like protein 1</fullName>
    </alternativeName>
    <alternativeName>
        <fullName evidence="1">General control of amino-acid synthesis 1-like protein 1</fullName>
    </alternativeName>
    <alternativeName>
        <fullName evidence="1">Translational activator GCN1</fullName>
        <shortName>HsGCN1</shortName>
    </alternativeName>
</protein>
<comment type="function">
    <text evidence="1 5 6 7 8 9">Ribosome collision sensor that plays a key role in the RNF14-RNF25 translation quality control pathway, a pathway that takes place when a ribosome has stalled during translation, and which promotes ubiquitination and degradation of translation factors on stalled ribosomes (PubMed:32610081, PubMed:36638793, PubMed:37651229, PubMed:37951215, PubMed:37951216). Directly binds to the ribosome and acts as a sentinel for colliding ribosomes: activated following ribosome stalling and promotes recruitment of RNF14, which directly ubiquitinates EEF1A1/eEF1A, leading to its degradation (PubMed:36638793, PubMed:37951215, PubMed:37951216). In addition to EEF1A1/eEF1A, the RNF14-RNF25 translation quality control pathway mediates degradation of ETF1/eRF1 and ubiquitination of ribosomal protein (PubMed:36638793, PubMed:37651229). GCN1 also acts as a positive activator of the integrated stress response (ISR) by mediating activation of EIF2AK4/GCN2 in response to amino acid starvation (By similarity). Interaction with EIF2AK4/GCN2 on translating ribosomes stimulates EIF2AK4/GCN2 kinase activity, leading to phosphorylation of eukaryotic translation initiation factor 2 (eIF-2-alpha/EIF2S1) (By similarity). EIF2S1/eIF-2-alpha phosphorylation converts EIF2S1/eIF-2-alpha into a global protein synthesis inhibitor, leading to a global attenuation of cap-dependent translation, and thus to a reduced overall utilization of amino acids, while concomitantly initiating the preferential translation of ISR-specific mRNAs, such as the transcriptional activator ATF4, and hence allowing ATF4-mediated reprogramming of amino acid biosynthetic gene expression to alleviate nutrient depletion (By similarity).</text>
</comment>
<comment type="subunit">
    <text evidence="1 6">Interacts with EIF2AK4/GCN2; this interaction stimulates the EIF2AK4/GCN2 kinase activity and is impaired by IMPACT upon a variety of stress conditions, such as amino acid depletion, UV-C irradiation, proteasome inhibitor treatment and glucose deprivation (PubMed:36638793). Interacts with IMPACT; this prevents the interaction of GCN1 with EIF2AK4/GCN2 and inhibits EIF2AK4/GCN2 kinase activity (By similarity). Interacts with RNF14; interaction takes place following ribosome stalling and promotes recruitment of RNF14 (PubMed:36638793).</text>
</comment>
<comment type="subcellular location">
    <subcellularLocation>
        <location evidence="1">Cytoplasm</location>
    </subcellularLocation>
    <text evidence="1">Associates with ribosomes in undifferentiated neuroblastoma cells and increases after neuronal differentiation.</text>
</comment>
<comment type="tissue specificity">
    <text evidence="10 11">Ubiquitously expressed (PubMed:9039502). Expressed in skeletal muscules, ovary and testis (PubMed:9234705).</text>
</comment>
<comment type="domain">
    <text evidence="6">The RWDBD (RWD-binding domain) region mediates binding to RWD domain-containing proteins, such as EIF2AK4/GCN2, IMPACT and RNF14.</text>
</comment>
<comment type="similarity">
    <text evidence="14">Belongs to the GCN1 family.</text>
</comment>
<comment type="sequence caution" evidence="14">
    <conflict type="frameshift">
        <sequence resource="EMBL-CDS" id="AAC51648"/>
    </conflict>
</comment>
<comment type="sequence caution" evidence="14">
    <conflict type="erroneous initiation">
        <sequence resource="EMBL-CDS" id="BAA13209"/>
    </conflict>
    <text>Extended N-terminus.</text>
</comment>